<keyword id="KW-0963">Cytoplasm</keyword>
<keyword id="KW-0238">DNA-binding</keyword>
<keyword id="KW-0731">Sigma factor</keyword>
<keyword id="KW-0804">Transcription</keyword>
<keyword id="KW-0805">Transcription regulation</keyword>
<reference key="1">
    <citation type="journal article" date="1999" name="Nature">
        <title>Genomic sequence comparison of two unrelated isolates of the human gastric pathogen Helicobacter pylori.</title>
        <authorList>
            <person name="Alm R.A."/>
            <person name="Ling L.-S.L."/>
            <person name="Moir D.T."/>
            <person name="King B.L."/>
            <person name="Brown E.D."/>
            <person name="Doig P.C."/>
            <person name="Smith D.R."/>
            <person name="Noonan B."/>
            <person name="Guild B.C."/>
            <person name="deJonge B.L."/>
            <person name="Carmel G."/>
            <person name="Tummino P.J."/>
            <person name="Caruso A."/>
            <person name="Uria-Nickelsen M."/>
            <person name="Mills D.M."/>
            <person name="Ives C."/>
            <person name="Gibson R."/>
            <person name="Merberg D."/>
            <person name="Mills S.D."/>
            <person name="Jiang Q."/>
            <person name="Taylor D.E."/>
            <person name="Vovis G.F."/>
            <person name="Trust T.J."/>
        </authorList>
    </citation>
    <scope>NUCLEOTIDE SEQUENCE [LARGE SCALE GENOMIC DNA]</scope>
    <source>
        <strain>J99 / ATCC 700824</strain>
    </source>
</reference>
<organism>
    <name type="scientific">Helicobacter pylori (strain J99 / ATCC 700824)</name>
    <name type="common">Campylobacter pylori J99</name>
    <dbReference type="NCBI Taxonomy" id="85963"/>
    <lineage>
        <taxon>Bacteria</taxon>
        <taxon>Pseudomonadati</taxon>
        <taxon>Campylobacterota</taxon>
        <taxon>Epsilonproteobacteria</taxon>
        <taxon>Campylobacterales</taxon>
        <taxon>Helicobacteraceae</taxon>
        <taxon>Helicobacter</taxon>
    </lineage>
</organism>
<feature type="chain" id="PRO_0000093891" description="RNA polymerase sigma factor RpoD">
    <location>
        <begin position="1"/>
        <end position="681"/>
    </location>
</feature>
<feature type="DNA-binding region" description="H-T-H motif" evidence="1">
    <location>
        <begin position="641"/>
        <end position="660"/>
    </location>
</feature>
<feature type="region of interest" description="Disordered" evidence="2">
    <location>
        <begin position="1"/>
        <end position="60"/>
    </location>
</feature>
<feature type="region of interest" description="Disordered" evidence="2">
    <location>
        <begin position="239"/>
        <end position="270"/>
    </location>
</feature>
<feature type="region of interest" description="Sigma-70 factor domain-2" evidence="1">
    <location>
        <begin position="446"/>
        <end position="516"/>
    </location>
</feature>
<feature type="region of interest" description="Sigma-70 factor domain-3" evidence="1">
    <location>
        <begin position="525"/>
        <end position="601"/>
    </location>
</feature>
<feature type="region of interest" description="Sigma-70 factor domain-4" evidence="1">
    <location>
        <begin position="614"/>
        <end position="668"/>
    </location>
</feature>
<feature type="short sequence motif" description="Interaction with polymerase core subunit RpoC">
    <location>
        <begin position="470"/>
        <end position="473"/>
    </location>
</feature>
<feature type="compositionally biased region" description="Basic and acidic residues" evidence="2">
    <location>
        <begin position="261"/>
        <end position="270"/>
    </location>
</feature>
<evidence type="ECO:0000255" key="1">
    <source>
        <dbReference type="HAMAP-Rule" id="MF_00963"/>
    </source>
</evidence>
<evidence type="ECO:0000256" key="2">
    <source>
        <dbReference type="SAM" id="MobiDB-lite"/>
    </source>
</evidence>
<protein>
    <recommendedName>
        <fullName evidence="1">RNA polymerase sigma factor RpoD</fullName>
    </recommendedName>
    <alternativeName>
        <fullName evidence="1">Sigma-70</fullName>
    </alternativeName>
</protein>
<name>RPOD_HELPJ</name>
<comment type="function">
    <text evidence="1">Sigma factors are initiation factors that promote the attachment of RNA polymerase to specific initiation sites and are then released. This sigma factor is the primary sigma factor during exponential growth.</text>
</comment>
<comment type="subunit">
    <text evidence="1">Interacts transiently with the RNA polymerase catalytic core.</text>
</comment>
<comment type="subcellular location">
    <subcellularLocation>
        <location evidence="1">Cytoplasm</location>
    </subcellularLocation>
</comment>
<comment type="similarity">
    <text evidence="1">Belongs to the sigma-70 factor family. RpoD/SigA subfamily.</text>
</comment>
<dbReference type="EMBL" id="AE001439">
    <property type="protein sequence ID" value="AAD05665.1"/>
    <property type="molecule type" value="Genomic_DNA"/>
</dbReference>
<dbReference type="PIR" id="D71976">
    <property type="entry name" value="D71976"/>
</dbReference>
<dbReference type="SMR" id="Q9ZMY3"/>
<dbReference type="KEGG" id="hpj:jhp_0081"/>
<dbReference type="PATRIC" id="fig|85963.30.peg.952"/>
<dbReference type="eggNOG" id="COG0568">
    <property type="taxonomic scope" value="Bacteria"/>
</dbReference>
<dbReference type="Proteomes" id="UP000000804">
    <property type="component" value="Chromosome"/>
</dbReference>
<dbReference type="GO" id="GO:0005737">
    <property type="term" value="C:cytoplasm"/>
    <property type="evidence" value="ECO:0007669"/>
    <property type="project" value="UniProtKB-SubCell"/>
</dbReference>
<dbReference type="GO" id="GO:0003677">
    <property type="term" value="F:DNA binding"/>
    <property type="evidence" value="ECO:0007669"/>
    <property type="project" value="UniProtKB-UniRule"/>
</dbReference>
<dbReference type="GO" id="GO:0016987">
    <property type="term" value="F:sigma factor activity"/>
    <property type="evidence" value="ECO:0007669"/>
    <property type="project" value="UniProtKB-UniRule"/>
</dbReference>
<dbReference type="GO" id="GO:0006352">
    <property type="term" value="P:DNA-templated transcription initiation"/>
    <property type="evidence" value="ECO:0007669"/>
    <property type="project" value="UniProtKB-UniRule"/>
</dbReference>
<dbReference type="CDD" id="cd06171">
    <property type="entry name" value="Sigma70_r4"/>
    <property type="match status" value="1"/>
</dbReference>
<dbReference type="FunFam" id="1.10.601.10:FF:000001">
    <property type="entry name" value="RNA polymerase sigma factor SigA"/>
    <property type="match status" value="1"/>
</dbReference>
<dbReference type="Gene3D" id="1.10.601.10">
    <property type="entry name" value="RNA Polymerase Primary Sigma Factor"/>
    <property type="match status" value="1"/>
</dbReference>
<dbReference type="Gene3D" id="1.10.10.10">
    <property type="entry name" value="Winged helix-like DNA-binding domain superfamily/Winged helix DNA-binding domain"/>
    <property type="match status" value="2"/>
</dbReference>
<dbReference type="HAMAP" id="MF_00963">
    <property type="entry name" value="Sigma70_RpoD_SigA"/>
    <property type="match status" value="1"/>
</dbReference>
<dbReference type="InterPro" id="IPR014284">
    <property type="entry name" value="RNA_pol_sigma-70_dom"/>
</dbReference>
<dbReference type="InterPro" id="IPR000943">
    <property type="entry name" value="RNA_pol_sigma70"/>
</dbReference>
<dbReference type="InterPro" id="IPR009042">
    <property type="entry name" value="RNA_pol_sigma70_r1_2"/>
</dbReference>
<dbReference type="InterPro" id="IPR007627">
    <property type="entry name" value="RNA_pol_sigma70_r2"/>
</dbReference>
<dbReference type="InterPro" id="IPR007624">
    <property type="entry name" value="RNA_pol_sigma70_r3"/>
</dbReference>
<dbReference type="InterPro" id="IPR007630">
    <property type="entry name" value="RNA_pol_sigma70_r4"/>
</dbReference>
<dbReference type="InterPro" id="IPR013325">
    <property type="entry name" value="RNA_pol_sigma_r2"/>
</dbReference>
<dbReference type="InterPro" id="IPR013324">
    <property type="entry name" value="RNA_pol_sigma_r3/r4-like"/>
</dbReference>
<dbReference type="InterPro" id="IPR012760">
    <property type="entry name" value="RNA_pol_sigma_RpoD_C"/>
</dbReference>
<dbReference type="InterPro" id="IPR050239">
    <property type="entry name" value="Sigma-70_RNA_pol_init_factors"/>
</dbReference>
<dbReference type="InterPro" id="IPR028630">
    <property type="entry name" value="Sigma70_RpoD"/>
</dbReference>
<dbReference type="InterPro" id="IPR036388">
    <property type="entry name" value="WH-like_DNA-bd_sf"/>
</dbReference>
<dbReference type="NCBIfam" id="NF004208">
    <property type="entry name" value="PRK05658.1"/>
    <property type="match status" value="1"/>
</dbReference>
<dbReference type="NCBIfam" id="TIGR02393">
    <property type="entry name" value="RpoD_Cterm"/>
    <property type="match status" value="1"/>
</dbReference>
<dbReference type="NCBIfam" id="TIGR02937">
    <property type="entry name" value="sigma70-ECF"/>
    <property type="match status" value="1"/>
</dbReference>
<dbReference type="PANTHER" id="PTHR30603">
    <property type="entry name" value="RNA POLYMERASE SIGMA FACTOR RPO"/>
    <property type="match status" value="1"/>
</dbReference>
<dbReference type="PANTHER" id="PTHR30603:SF60">
    <property type="entry name" value="RNA POLYMERASE SIGMA FACTOR RPOD"/>
    <property type="match status" value="1"/>
</dbReference>
<dbReference type="Pfam" id="PF00140">
    <property type="entry name" value="Sigma70_r1_2"/>
    <property type="match status" value="1"/>
</dbReference>
<dbReference type="Pfam" id="PF04542">
    <property type="entry name" value="Sigma70_r2"/>
    <property type="match status" value="1"/>
</dbReference>
<dbReference type="Pfam" id="PF04539">
    <property type="entry name" value="Sigma70_r3"/>
    <property type="match status" value="1"/>
</dbReference>
<dbReference type="Pfam" id="PF04545">
    <property type="entry name" value="Sigma70_r4"/>
    <property type="match status" value="1"/>
</dbReference>
<dbReference type="PRINTS" id="PR00046">
    <property type="entry name" value="SIGMA70FCT"/>
</dbReference>
<dbReference type="SUPFAM" id="SSF88946">
    <property type="entry name" value="Sigma2 domain of RNA polymerase sigma factors"/>
    <property type="match status" value="1"/>
</dbReference>
<dbReference type="SUPFAM" id="SSF88659">
    <property type="entry name" value="Sigma3 and sigma4 domains of RNA polymerase sigma factors"/>
    <property type="match status" value="2"/>
</dbReference>
<dbReference type="PROSITE" id="PS00715">
    <property type="entry name" value="SIGMA70_1"/>
    <property type="match status" value="1"/>
</dbReference>
<dbReference type="PROSITE" id="PS00716">
    <property type="entry name" value="SIGMA70_2"/>
    <property type="match status" value="1"/>
</dbReference>
<gene>
    <name evidence="1" type="primary">rpoD</name>
    <name type="ordered locus">jhp_0081</name>
</gene>
<proteinExistence type="inferred from homology"/>
<accession>Q9ZMY3</accession>
<sequence length="681" mass="78763">MKKKANEEKAPKRAKQEAKTEATQENKAKESNKENKNNKAKEGKIKEAKTKESKVKETAKEPIPVKKLSFNEALEELFANSLSDCVSYESIIQISAKVPTLAQIKKIKELCQKYQKKLVSSSEYAKKLNAIDKIKNTEEKQKVLDEELEDGYDFLKEKDFLEWSRSDSPVRMYLREMGDIKLLSKDEEIELSKQIRLGEDIILDAICSVPYLIDFIYAYKDALINRERRVKELFRSFDDDDENSVSDPKKDDDSEEDEENEERKKVVSEKDKKRVEKVQESFKALDKAKKEWLKALEAPIDEKEDELVRSLTLAYKRQTLKDRLYDLEPTSKLINELVKTMETTLKSGDGFEKELKRLEYKLPLFNDTLIANHKKILANITNMTKEDIIAQVPEATMVSVYMDLKKLFLTKEASEEGFDLAPNKLKEILEQIKRGKLISDRAKNKMAKSNLRLVVSIAKRFTSRGLPFLDLIQEGNIGLMKAVDKFEHEKGFKFSTYATWWIKQAISRAIADQARTIRIPIHMIDTINRINKVMRKHIQETGKEPDLEVVAEEVGLSLDKVKNVIKVTKEPISLETPVGNDDDGKFGDFVEDKNIVSSIDHIMREDLKAQIESVLDQLNEREKAVIRMRFGLLDDESDRTLEEIGKELNVTRERVRQIESSAIKKLRSPQYGRILRNYLRI</sequence>